<comment type="function">
    <text evidence="1">Plays an important role in the de novo pathway of purine nucleotide biosynthesis. Catalyzes the first committed step in the biosynthesis of AMP from IMP.</text>
</comment>
<comment type="catalytic activity">
    <reaction evidence="1">
        <text>IMP + L-aspartate + GTP = N(6)-(1,2-dicarboxyethyl)-AMP + GDP + phosphate + 2 H(+)</text>
        <dbReference type="Rhea" id="RHEA:15753"/>
        <dbReference type="ChEBI" id="CHEBI:15378"/>
        <dbReference type="ChEBI" id="CHEBI:29991"/>
        <dbReference type="ChEBI" id="CHEBI:37565"/>
        <dbReference type="ChEBI" id="CHEBI:43474"/>
        <dbReference type="ChEBI" id="CHEBI:57567"/>
        <dbReference type="ChEBI" id="CHEBI:58053"/>
        <dbReference type="ChEBI" id="CHEBI:58189"/>
        <dbReference type="EC" id="6.3.4.4"/>
    </reaction>
</comment>
<comment type="cofactor">
    <cofactor evidence="1">
        <name>Mg(2+)</name>
        <dbReference type="ChEBI" id="CHEBI:18420"/>
    </cofactor>
    <text evidence="1">Binds 1 Mg(2+) ion per subunit.</text>
</comment>
<comment type="pathway">
    <text evidence="1">Purine metabolism; AMP biosynthesis via de novo pathway; AMP from IMP: step 1/2.</text>
</comment>
<comment type="subunit">
    <text evidence="1">Homodimer.</text>
</comment>
<comment type="subcellular location">
    <subcellularLocation>
        <location evidence="1">Cytoplasm</location>
    </subcellularLocation>
</comment>
<comment type="similarity">
    <text evidence="1">Belongs to the adenylosuccinate synthetase family.</text>
</comment>
<accession>A2BVG8</accession>
<feature type="chain" id="PRO_1000000890" description="Adenylosuccinate synthetase">
    <location>
        <begin position="1"/>
        <end position="436"/>
    </location>
</feature>
<feature type="active site" description="Proton acceptor" evidence="1">
    <location>
        <position position="13"/>
    </location>
</feature>
<feature type="active site" description="Proton donor" evidence="1">
    <location>
        <position position="41"/>
    </location>
</feature>
<feature type="binding site" evidence="1">
    <location>
        <begin position="12"/>
        <end position="18"/>
    </location>
    <ligand>
        <name>GTP</name>
        <dbReference type="ChEBI" id="CHEBI:37565"/>
    </ligand>
</feature>
<feature type="binding site" description="in other chain" evidence="1">
    <location>
        <begin position="13"/>
        <end position="16"/>
    </location>
    <ligand>
        <name>IMP</name>
        <dbReference type="ChEBI" id="CHEBI:58053"/>
        <note>ligand shared between dimeric partners</note>
    </ligand>
</feature>
<feature type="binding site" evidence="1">
    <location>
        <position position="13"/>
    </location>
    <ligand>
        <name>Mg(2+)</name>
        <dbReference type="ChEBI" id="CHEBI:18420"/>
    </ligand>
</feature>
<feature type="binding site" description="in other chain" evidence="1">
    <location>
        <begin position="38"/>
        <end position="41"/>
    </location>
    <ligand>
        <name>IMP</name>
        <dbReference type="ChEBI" id="CHEBI:58053"/>
        <note>ligand shared between dimeric partners</note>
    </ligand>
</feature>
<feature type="binding site" evidence="1">
    <location>
        <begin position="40"/>
        <end position="42"/>
    </location>
    <ligand>
        <name>GTP</name>
        <dbReference type="ChEBI" id="CHEBI:37565"/>
    </ligand>
</feature>
<feature type="binding site" evidence="1">
    <location>
        <position position="40"/>
    </location>
    <ligand>
        <name>Mg(2+)</name>
        <dbReference type="ChEBI" id="CHEBI:18420"/>
    </ligand>
</feature>
<feature type="binding site" description="in other chain" evidence="1">
    <location>
        <position position="128"/>
    </location>
    <ligand>
        <name>IMP</name>
        <dbReference type="ChEBI" id="CHEBI:58053"/>
        <note>ligand shared between dimeric partners</note>
    </ligand>
</feature>
<feature type="binding site" evidence="1">
    <location>
        <position position="142"/>
    </location>
    <ligand>
        <name>IMP</name>
        <dbReference type="ChEBI" id="CHEBI:58053"/>
        <note>ligand shared between dimeric partners</note>
    </ligand>
</feature>
<feature type="binding site" description="in other chain" evidence="1">
    <location>
        <position position="223"/>
    </location>
    <ligand>
        <name>IMP</name>
        <dbReference type="ChEBI" id="CHEBI:58053"/>
        <note>ligand shared between dimeric partners</note>
    </ligand>
</feature>
<feature type="binding site" description="in other chain" evidence="1">
    <location>
        <position position="238"/>
    </location>
    <ligand>
        <name>IMP</name>
        <dbReference type="ChEBI" id="CHEBI:58053"/>
        <note>ligand shared between dimeric partners</note>
    </ligand>
</feature>
<feature type="binding site" evidence="1">
    <location>
        <begin position="298"/>
        <end position="304"/>
    </location>
    <ligand>
        <name>substrate</name>
    </ligand>
</feature>
<feature type="binding site" description="in other chain" evidence="1">
    <location>
        <position position="302"/>
    </location>
    <ligand>
        <name>IMP</name>
        <dbReference type="ChEBI" id="CHEBI:58053"/>
        <note>ligand shared between dimeric partners</note>
    </ligand>
</feature>
<feature type="binding site" evidence="1">
    <location>
        <position position="304"/>
    </location>
    <ligand>
        <name>GTP</name>
        <dbReference type="ChEBI" id="CHEBI:37565"/>
    </ligand>
</feature>
<feature type="binding site" evidence="1">
    <location>
        <begin position="330"/>
        <end position="332"/>
    </location>
    <ligand>
        <name>GTP</name>
        <dbReference type="ChEBI" id="CHEBI:37565"/>
    </ligand>
</feature>
<feature type="binding site" evidence="1">
    <location>
        <begin position="412"/>
        <end position="414"/>
    </location>
    <ligand>
        <name>GTP</name>
        <dbReference type="ChEBI" id="CHEBI:37565"/>
    </ligand>
</feature>
<dbReference type="EC" id="6.3.4.4" evidence="1"/>
<dbReference type="EMBL" id="CP000552">
    <property type="protein sequence ID" value="ABM71779.1"/>
    <property type="molecule type" value="Genomic_DNA"/>
</dbReference>
<dbReference type="RefSeq" id="WP_011819886.1">
    <property type="nucleotide sequence ID" value="NC_008817.1"/>
</dbReference>
<dbReference type="SMR" id="A2BVG8"/>
<dbReference type="STRING" id="167542.P9515_05701"/>
<dbReference type="GeneID" id="60201119"/>
<dbReference type="KEGG" id="pmc:P9515_05701"/>
<dbReference type="eggNOG" id="COG0104">
    <property type="taxonomic scope" value="Bacteria"/>
</dbReference>
<dbReference type="HOGENOM" id="CLU_029848_0_0_3"/>
<dbReference type="OrthoDB" id="9807553at2"/>
<dbReference type="UniPathway" id="UPA00075">
    <property type="reaction ID" value="UER00335"/>
</dbReference>
<dbReference type="Proteomes" id="UP000001589">
    <property type="component" value="Chromosome"/>
</dbReference>
<dbReference type="GO" id="GO:0005737">
    <property type="term" value="C:cytoplasm"/>
    <property type="evidence" value="ECO:0007669"/>
    <property type="project" value="UniProtKB-SubCell"/>
</dbReference>
<dbReference type="GO" id="GO:0004019">
    <property type="term" value="F:adenylosuccinate synthase activity"/>
    <property type="evidence" value="ECO:0007669"/>
    <property type="project" value="UniProtKB-UniRule"/>
</dbReference>
<dbReference type="GO" id="GO:0005525">
    <property type="term" value="F:GTP binding"/>
    <property type="evidence" value="ECO:0007669"/>
    <property type="project" value="UniProtKB-UniRule"/>
</dbReference>
<dbReference type="GO" id="GO:0000287">
    <property type="term" value="F:magnesium ion binding"/>
    <property type="evidence" value="ECO:0007669"/>
    <property type="project" value="UniProtKB-UniRule"/>
</dbReference>
<dbReference type="GO" id="GO:0044208">
    <property type="term" value="P:'de novo' AMP biosynthetic process"/>
    <property type="evidence" value="ECO:0007669"/>
    <property type="project" value="UniProtKB-UniRule"/>
</dbReference>
<dbReference type="GO" id="GO:0046040">
    <property type="term" value="P:IMP metabolic process"/>
    <property type="evidence" value="ECO:0007669"/>
    <property type="project" value="TreeGrafter"/>
</dbReference>
<dbReference type="CDD" id="cd03108">
    <property type="entry name" value="AdSS"/>
    <property type="match status" value="1"/>
</dbReference>
<dbReference type="FunFam" id="1.10.300.10:FF:000001">
    <property type="entry name" value="Adenylosuccinate synthetase"/>
    <property type="match status" value="1"/>
</dbReference>
<dbReference type="FunFam" id="3.90.170.10:FF:000001">
    <property type="entry name" value="Adenylosuccinate synthetase"/>
    <property type="match status" value="1"/>
</dbReference>
<dbReference type="Gene3D" id="3.40.440.10">
    <property type="entry name" value="Adenylosuccinate Synthetase, subunit A, domain 1"/>
    <property type="match status" value="1"/>
</dbReference>
<dbReference type="Gene3D" id="1.10.300.10">
    <property type="entry name" value="Adenylosuccinate Synthetase, subunit A, domain 2"/>
    <property type="match status" value="1"/>
</dbReference>
<dbReference type="Gene3D" id="3.90.170.10">
    <property type="entry name" value="Adenylosuccinate Synthetase, subunit A, domain 3"/>
    <property type="match status" value="1"/>
</dbReference>
<dbReference type="HAMAP" id="MF_00011">
    <property type="entry name" value="Adenylosucc_synth"/>
    <property type="match status" value="1"/>
</dbReference>
<dbReference type="InterPro" id="IPR018220">
    <property type="entry name" value="Adenylosuccin_syn_GTP-bd"/>
</dbReference>
<dbReference type="InterPro" id="IPR033128">
    <property type="entry name" value="Adenylosuccin_syn_Lys_AS"/>
</dbReference>
<dbReference type="InterPro" id="IPR042109">
    <property type="entry name" value="Adenylosuccinate_synth_dom1"/>
</dbReference>
<dbReference type="InterPro" id="IPR042110">
    <property type="entry name" value="Adenylosuccinate_synth_dom2"/>
</dbReference>
<dbReference type="InterPro" id="IPR042111">
    <property type="entry name" value="Adenylosuccinate_synth_dom3"/>
</dbReference>
<dbReference type="InterPro" id="IPR001114">
    <property type="entry name" value="Adenylosuccinate_synthetase"/>
</dbReference>
<dbReference type="InterPro" id="IPR027417">
    <property type="entry name" value="P-loop_NTPase"/>
</dbReference>
<dbReference type="NCBIfam" id="NF002223">
    <property type="entry name" value="PRK01117.1"/>
    <property type="match status" value="1"/>
</dbReference>
<dbReference type="NCBIfam" id="TIGR00184">
    <property type="entry name" value="purA"/>
    <property type="match status" value="1"/>
</dbReference>
<dbReference type="PANTHER" id="PTHR11846">
    <property type="entry name" value="ADENYLOSUCCINATE SYNTHETASE"/>
    <property type="match status" value="1"/>
</dbReference>
<dbReference type="PANTHER" id="PTHR11846:SF0">
    <property type="entry name" value="ADENYLOSUCCINATE SYNTHETASE"/>
    <property type="match status" value="1"/>
</dbReference>
<dbReference type="Pfam" id="PF00709">
    <property type="entry name" value="Adenylsucc_synt"/>
    <property type="match status" value="1"/>
</dbReference>
<dbReference type="SMART" id="SM00788">
    <property type="entry name" value="Adenylsucc_synt"/>
    <property type="match status" value="1"/>
</dbReference>
<dbReference type="SUPFAM" id="SSF52540">
    <property type="entry name" value="P-loop containing nucleoside triphosphate hydrolases"/>
    <property type="match status" value="1"/>
</dbReference>
<dbReference type="PROSITE" id="PS01266">
    <property type="entry name" value="ADENYLOSUCCIN_SYN_1"/>
    <property type="match status" value="1"/>
</dbReference>
<dbReference type="PROSITE" id="PS00513">
    <property type="entry name" value="ADENYLOSUCCIN_SYN_2"/>
    <property type="match status" value="1"/>
</dbReference>
<name>PURA_PROM5</name>
<organism>
    <name type="scientific">Prochlorococcus marinus (strain MIT 9515)</name>
    <dbReference type="NCBI Taxonomy" id="167542"/>
    <lineage>
        <taxon>Bacteria</taxon>
        <taxon>Bacillati</taxon>
        <taxon>Cyanobacteriota</taxon>
        <taxon>Cyanophyceae</taxon>
        <taxon>Synechococcales</taxon>
        <taxon>Prochlorococcaceae</taxon>
        <taxon>Prochlorococcus</taxon>
    </lineage>
</organism>
<keyword id="KW-0963">Cytoplasm</keyword>
<keyword id="KW-0342">GTP-binding</keyword>
<keyword id="KW-0436">Ligase</keyword>
<keyword id="KW-0460">Magnesium</keyword>
<keyword id="KW-0479">Metal-binding</keyword>
<keyword id="KW-0547">Nucleotide-binding</keyword>
<keyword id="KW-0658">Purine biosynthesis</keyword>
<reference key="1">
    <citation type="journal article" date="2007" name="PLoS Genet.">
        <title>Patterns and implications of gene gain and loss in the evolution of Prochlorococcus.</title>
        <authorList>
            <person name="Kettler G.C."/>
            <person name="Martiny A.C."/>
            <person name="Huang K."/>
            <person name="Zucker J."/>
            <person name="Coleman M.L."/>
            <person name="Rodrigue S."/>
            <person name="Chen F."/>
            <person name="Lapidus A."/>
            <person name="Ferriera S."/>
            <person name="Johnson J."/>
            <person name="Steglich C."/>
            <person name="Church G.M."/>
            <person name="Richardson P."/>
            <person name="Chisholm S.W."/>
        </authorList>
    </citation>
    <scope>NUCLEOTIDE SEQUENCE [LARGE SCALE GENOMIC DNA]</scope>
    <source>
        <strain>MIT 9515</strain>
    </source>
</reference>
<proteinExistence type="inferred from homology"/>
<evidence type="ECO:0000255" key="1">
    <source>
        <dbReference type="HAMAP-Rule" id="MF_00011"/>
    </source>
</evidence>
<sequence>MANVVVIGAQWGDEGKGKITDLLSRSADVVVRYQGGVNAGHTIVVDDKVLKLHLIPSGILYEDTTCLIGSGTVVDPKILLKEIDMLIENGIDISGLKISSTSHVTMPYHRLLDEAMEADRGSNKIGTTGRGIGPTYADKSQRNGIRIRDLLNEDRLKDVLEIPLKEKNGVLEKIYGIRPLCKDEIIKEYLDYGKRLSKHVVDCTRTIHSAAKNKQNILFEGAQGTLLDLDHGTYPFVTSSNPISGGACIGAGVGPTLIDRVIGVAKAYTTRVGEGPFVTELQGSINDQLCDRGSEFGTTTGRRRRCGWFDGVIGKYAVYVNGLDCLAVTKLDVLDELDEIQVCIAYELDGKEIDYFPTNSDDLKKCKPIFKKLKGWQCSTANCRKLSDLPENAMNYLRFLAELMEVPIAIVSLGANRDQTIVIEDPIHGPKRALLR</sequence>
<gene>
    <name evidence="1" type="primary">purA</name>
    <name type="ordered locus">P9515_05701</name>
</gene>
<protein>
    <recommendedName>
        <fullName evidence="1">Adenylosuccinate synthetase</fullName>
        <shortName evidence="1">AMPSase</shortName>
        <shortName evidence="1">AdSS</shortName>
        <ecNumber evidence="1">6.3.4.4</ecNumber>
    </recommendedName>
    <alternativeName>
        <fullName evidence="1">IMP--aspartate ligase</fullName>
    </alternativeName>
</protein>